<proteinExistence type="inferred from homology"/>
<protein>
    <recommendedName>
        <fullName evidence="1">Ribosome maturation factor RimP</fullName>
    </recommendedName>
</protein>
<organism>
    <name type="scientific">Aeromonas salmonicida (strain A449)</name>
    <dbReference type="NCBI Taxonomy" id="382245"/>
    <lineage>
        <taxon>Bacteria</taxon>
        <taxon>Pseudomonadati</taxon>
        <taxon>Pseudomonadota</taxon>
        <taxon>Gammaproteobacteria</taxon>
        <taxon>Aeromonadales</taxon>
        <taxon>Aeromonadaceae</taxon>
        <taxon>Aeromonas</taxon>
    </lineage>
</organism>
<gene>
    <name evidence="1" type="primary">rimP</name>
    <name type="ordered locus">ASA_1008</name>
</gene>
<keyword id="KW-0963">Cytoplasm</keyword>
<keyword id="KW-0690">Ribosome biogenesis</keyword>
<dbReference type="EMBL" id="CP000644">
    <property type="protein sequence ID" value="ABO89135.1"/>
    <property type="molecule type" value="Genomic_DNA"/>
</dbReference>
<dbReference type="RefSeq" id="WP_005317527.1">
    <property type="nucleotide sequence ID" value="NC_009348.1"/>
</dbReference>
<dbReference type="SMR" id="A4SJR3"/>
<dbReference type="STRING" id="29491.GCA_000820065_01175"/>
<dbReference type="GeneID" id="92722237"/>
<dbReference type="KEGG" id="asa:ASA_1008"/>
<dbReference type="eggNOG" id="COG0779">
    <property type="taxonomic scope" value="Bacteria"/>
</dbReference>
<dbReference type="HOGENOM" id="CLU_070525_1_1_6"/>
<dbReference type="Proteomes" id="UP000000225">
    <property type="component" value="Chromosome"/>
</dbReference>
<dbReference type="GO" id="GO:0005829">
    <property type="term" value="C:cytosol"/>
    <property type="evidence" value="ECO:0007669"/>
    <property type="project" value="TreeGrafter"/>
</dbReference>
<dbReference type="GO" id="GO:0000028">
    <property type="term" value="P:ribosomal small subunit assembly"/>
    <property type="evidence" value="ECO:0007669"/>
    <property type="project" value="TreeGrafter"/>
</dbReference>
<dbReference type="GO" id="GO:0006412">
    <property type="term" value="P:translation"/>
    <property type="evidence" value="ECO:0007669"/>
    <property type="project" value="TreeGrafter"/>
</dbReference>
<dbReference type="CDD" id="cd01734">
    <property type="entry name" value="YlxS_C"/>
    <property type="match status" value="1"/>
</dbReference>
<dbReference type="FunFam" id="3.30.300.70:FF:000001">
    <property type="entry name" value="Ribosome maturation factor RimP"/>
    <property type="match status" value="1"/>
</dbReference>
<dbReference type="Gene3D" id="2.30.30.180">
    <property type="entry name" value="Ribosome maturation factor RimP, C-terminal domain"/>
    <property type="match status" value="1"/>
</dbReference>
<dbReference type="Gene3D" id="3.30.300.70">
    <property type="entry name" value="RimP-like superfamily, N-terminal"/>
    <property type="match status" value="1"/>
</dbReference>
<dbReference type="HAMAP" id="MF_01077">
    <property type="entry name" value="RimP"/>
    <property type="match status" value="1"/>
</dbReference>
<dbReference type="InterPro" id="IPR003728">
    <property type="entry name" value="Ribosome_maturation_RimP"/>
</dbReference>
<dbReference type="InterPro" id="IPR028998">
    <property type="entry name" value="RimP_C"/>
</dbReference>
<dbReference type="InterPro" id="IPR036847">
    <property type="entry name" value="RimP_C_sf"/>
</dbReference>
<dbReference type="InterPro" id="IPR028989">
    <property type="entry name" value="RimP_N"/>
</dbReference>
<dbReference type="InterPro" id="IPR035956">
    <property type="entry name" value="RimP_N_sf"/>
</dbReference>
<dbReference type="NCBIfam" id="NF000927">
    <property type="entry name" value="PRK00092.1-1"/>
    <property type="match status" value="1"/>
</dbReference>
<dbReference type="NCBIfam" id="NF011233">
    <property type="entry name" value="PRK14640.1"/>
    <property type="match status" value="1"/>
</dbReference>
<dbReference type="PANTHER" id="PTHR33867">
    <property type="entry name" value="RIBOSOME MATURATION FACTOR RIMP"/>
    <property type="match status" value="1"/>
</dbReference>
<dbReference type="PANTHER" id="PTHR33867:SF1">
    <property type="entry name" value="RIBOSOME MATURATION FACTOR RIMP"/>
    <property type="match status" value="1"/>
</dbReference>
<dbReference type="Pfam" id="PF17384">
    <property type="entry name" value="DUF150_C"/>
    <property type="match status" value="1"/>
</dbReference>
<dbReference type="Pfam" id="PF02576">
    <property type="entry name" value="RimP_N"/>
    <property type="match status" value="1"/>
</dbReference>
<dbReference type="SUPFAM" id="SSF74942">
    <property type="entry name" value="YhbC-like, C-terminal domain"/>
    <property type="match status" value="1"/>
</dbReference>
<dbReference type="SUPFAM" id="SSF75420">
    <property type="entry name" value="YhbC-like, N-terminal domain"/>
    <property type="match status" value="1"/>
</dbReference>
<evidence type="ECO:0000255" key="1">
    <source>
        <dbReference type="HAMAP-Rule" id="MF_01077"/>
    </source>
</evidence>
<feature type="chain" id="PRO_1000064680" description="Ribosome maturation factor RimP">
    <location>
        <begin position="1"/>
        <end position="152"/>
    </location>
</feature>
<accession>A4SJR3</accession>
<name>RIMP_AERS4</name>
<comment type="function">
    <text evidence="1">Required for maturation of 30S ribosomal subunits.</text>
</comment>
<comment type="subcellular location">
    <subcellularLocation>
        <location evidence="1">Cytoplasm</location>
    </subcellularLocation>
</comment>
<comment type="similarity">
    <text evidence="1">Belongs to the RimP family.</text>
</comment>
<sequence length="152" mass="16799">MATLEQRLTDLLEAPVVALGFELWGIEFIRAGNHSTLRVFIDGENGVTVENCAEVSHQVGAIMDVEDPITEEYFLEVSSPGLDRPLFKVAQFEKYVGQEAAVQLRMATNNRRKFKGVIKAVQGDMITLTVDGKDDVLAFTNIQKANIVPNFG</sequence>
<reference key="1">
    <citation type="journal article" date="2008" name="BMC Genomics">
        <title>The genome of Aeromonas salmonicida subsp. salmonicida A449: insights into the evolution of a fish pathogen.</title>
        <authorList>
            <person name="Reith M.E."/>
            <person name="Singh R.K."/>
            <person name="Curtis B."/>
            <person name="Boyd J.M."/>
            <person name="Bouevitch A."/>
            <person name="Kimball J."/>
            <person name="Munholland J."/>
            <person name="Murphy C."/>
            <person name="Sarty D."/>
            <person name="Williams J."/>
            <person name="Nash J.H."/>
            <person name="Johnson S.C."/>
            <person name="Brown L.L."/>
        </authorList>
    </citation>
    <scope>NUCLEOTIDE SEQUENCE [LARGE SCALE GENOMIC DNA]</scope>
    <source>
        <strain>A449</strain>
    </source>
</reference>